<keyword id="KW-0056">Arginine metabolism</keyword>
<keyword id="KW-0378">Hydrolase</keyword>
<feature type="chain" id="PRO_1000065718" description="N-succinylarginine dihydrolase">
    <location>
        <begin position="1"/>
        <end position="446"/>
    </location>
</feature>
<feature type="active site" evidence="1">
    <location>
        <position position="174"/>
    </location>
</feature>
<feature type="active site" evidence="1">
    <location>
        <position position="249"/>
    </location>
</feature>
<feature type="active site" description="Nucleophile" evidence="1">
    <location>
        <position position="370"/>
    </location>
</feature>
<feature type="binding site" evidence="1">
    <location>
        <begin position="19"/>
        <end position="28"/>
    </location>
    <ligand>
        <name>substrate</name>
    </ligand>
</feature>
<feature type="binding site" evidence="1">
    <location>
        <position position="110"/>
    </location>
    <ligand>
        <name>substrate</name>
    </ligand>
</feature>
<feature type="binding site" evidence="1">
    <location>
        <begin position="137"/>
        <end position="138"/>
    </location>
    <ligand>
        <name>substrate</name>
    </ligand>
</feature>
<feature type="binding site" evidence="1">
    <location>
        <position position="213"/>
    </location>
    <ligand>
        <name>substrate</name>
    </ligand>
</feature>
<feature type="binding site" evidence="1">
    <location>
        <position position="251"/>
    </location>
    <ligand>
        <name>substrate</name>
    </ligand>
</feature>
<feature type="binding site" evidence="1">
    <location>
        <position position="364"/>
    </location>
    <ligand>
        <name>substrate</name>
    </ligand>
</feature>
<reference key="1">
    <citation type="journal article" date="2010" name="Genome Biol. Evol.">
        <title>Continuing evolution of Burkholderia mallei through genome reduction and large-scale rearrangements.</title>
        <authorList>
            <person name="Losada L."/>
            <person name="Ronning C.M."/>
            <person name="DeShazer D."/>
            <person name="Woods D."/>
            <person name="Fedorova N."/>
            <person name="Kim H.S."/>
            <person name="Shabalina S.A."/>
            <person name="Pearson T.R."/>
            <person name="Brinkac L."/>
            <person name="Tan P."/>
            <person name="Nandi T."/>
            <person name="Crabtree J."/>
            <person name="Badger J."/>
            <person name="Beckstrom-Sternberg S."/>
            <person name="Saqib M."/>
            <person name="Schutzer S.E."/>
            <person name="Keim P."/>
            <person name="Nierman W.C."/>
        </authorList>
    </citation>
    <scope>NUCLEOTIDE SEQUENCE [LARGE SCALE GENOMIC DNA]</scope>
    <source>
        <strain>SAVP1</strain>
    </source>
</reference>
<dbReference type="EC" id="3.5.3.23" evidence="1"/>
<dbReference type="EMBL" id="CP000526">
    <property type="protein sequence ID" value="ABM51502.1"/>
    <property type="molecule type" value="Genomic_DNA"/>
</dbReference>
<dbReference type="RefSeq" id="WP_004192611.1">
    <property type="nucleotide sequence ID" value="NC_008785.1"/>
</dbReference>
<dbReference type="SMR" id="A1V674"/>
<dbReference type="GeneID" id="93060961"/>
<dbReference type="KEGG" id="bmv:BMASAVP1_A2421"/>
<dbReference type="HOGENOM" id="CLU_053835_0_0_4"/>
<dbReference type="UniPathway" id="UPA00185">
    <property type="reaction ID" value="UER00280"/>
</dbReference>
<dbReference type="GO" id="GO:0009015">
    <property type="term" value="F:N-succinylarginine dihydrolase activity"/>
    <property type="evidence" value="ECO:0007669"/>
    <property type="project" value="UniProtKB-UniRule"/>
</dbReference>
<dbReference type="GO" id="GO:0019544">
    <property type="term" value="P:arginine catabolic process to glutamate"/>
    <property type="evidence" value="ECO:0007669"/>
    <property type="project" value="UniProtKB-UniRule"/>
</dbReference>
<dbReference type="GO" id="GO:0019545">
    <property type="term" value="P:arginine catabolic process to succinate"/>
    <property type="evidence" value="ECO:0007669"/>
    <property type="project" value="UniProtKB-UniRule"/>
</dbReference>
<dbReference type="Gene3D" id="3.75.10.20">
    <property type="entry name" value="Succinylarginine dihydrolase"/>
    <property type="match status" value="1"/>
</dbReference>
<dbReference type="HAMAP" id="MF_01172">
    <property type="entry name" value="AstB"/>
    <property type="match status" value="1"/>
</dbReference>
<dbReference type="InterPro" id="IPR037031">
    <property type="entry name" value="AstB_sf"/>
</dbReference>
<dbReference type="InterPro" id="IPR007079">
    <property type="entry name" value="SuccinylArg_d-Hdrlase_AstB"/>
</dbReference>
<dbReference type="NCBIfam" id="TIGR03241">
    <property type="entry name" value="arg_catab_astB"/>
    <property type="match status" value="1"/>
</dbReference>
<dbReference type="NCBIfam" id="NF009789">
    <property type="entry name" value="PRK13281.1"/>
    <property type="match status" value="1"/>
</dbReference>
<dbReference type="PANTHER" id="PTHR30420">
    <property type="entry name" value="N-SUCCINYLARGININE DIHYDROLASE"/>
    <property type="match status" value="1"/>
</dbReference>
<dbReference type="PANTHER" id="PTHR30420:SF2">
    <property type="entry name" value="N-SUCCINYLARGININE DIHYDROLASE"/>
    <property type="match status" value="1"/>
</dbReference>
<dbReference type="Pfam" id="PF04996">
    <property type="entry name" value="AstB"/>
    <property type="match status" value="1"/>
</dbReference>
<dbReference type="SUPFAM" id="SSF55909">
    <property type="entry name" value="Pentein"/>
    <property type="match status" value="1"/>
</dbReference>
<gene>
    <name evidence="1" type="primary">astB</name>
    <name type="ordered locus">BMASAVP1_A2421</name>
</gene>
<name>ASTB_BURMS</name>
<protein>
    <recommendedName>
        <fullName evidence="1">N-succinylarginine dihydrolase</fullName>
        <ecNumber evidence="1">3.5.3.23</ecNumber>
    </recommendedName>
</protein>
<sequence>MNAKEANFDGLVGPTHNYAGLSFGNVASLSNEKSDANPKAAAKQGLRKMKQLADLGFAQGVLPPQERPSLRLLRELGFSGKDADVIAKAARQAPELLAAASSASAMWTANAATVSPSADTSDARVHFTPANLCSKLHRAIEHESTRRTLAAIFADEARFAVHDALPGTPALGDEGAANHTRFCAEYGAPGVEFFVYGRAEYRRGPEPTRFPARQTFEASRAVAHRHGLREEATIYAQQRPDVIDAGVFHNDVIAVGNRDTLFCHEHAFVDRQAVYDALAASLGALGAQLNVIEVPDRAVSVADAVGSYLFNSQLLAREDGTQMLVVPQECRENANVAAYLDALVAGNGPIRDVRVFDLRESMKNGGGPACLRLRVVLNDAERAAVKPNVWIGDALFASLDAWIDKHYRDRLSPVDLADPALLDESRTALDELTQILGLGSLYDFQR</sequence>
<evidence type="ECO:0000255" key="1">
    <source>
        <dbReference type="HAMAP-Rule" id="MF_01172"/>
    </source>
</evidence>
<accession>A1V674</accession>
<proteinExistence type="inferred from homology"/>
<organism>
    <name type="scientific">Burkholderia mallei (strain SAVP1)</name>
    <dbReference type="NCBI Taxonomy" id="320388"/>
    <lineage>
        <taxon>Bacteria</taxon>
        <taxon>Pseudomonadati</taxon>
        <taxon>Pseudomonadota</taxon>
        <taxon>Betaproteobacteria</taxon>
        <taxon>Burkholderiales</taxon>
        <taxon>Burkholderiaceae</taxon>
        <taxon>Burkholderia</taxon>
        <taxon>pseudomallei group</taxon>
    </lineage>
</organism>
<comment type="function">
    <text evidence="1">Catalyzes the hydrolysis of N(2)-succinylarginine into N(2)-succinylornithine, ammonia and CO(2).</text>
</comment>
<comment type="catalytic activity">
    <reaction evidence="1">
        <text>N(2)-succinyl-L-arginine + 2 H2O + 2 H(+) = N(2)-succinyl-L-ornithine + 2 NH4(+) + CO2</text>
        <dbReference type="Rhea" id="RHEA:19533"/>
        <dbReference type="ChEBI" id="CHEBI:15377"/>
        <dbReference type="ChEBI" id="CHEBI:15378"/>
        <dbReference type="ChEBI" id="CHEBI:16526"/>
        <dbReference type="ChEBI" id="CHEBI:28938"/>
        <dbReference type="ChEBI" id="CHEBI:58241"/>
        <dbReference type="ChEBI" id="CHEBI:58514"/>
        <dbReference type="EC" id="3.5.3.23"/>
    </reaction>
</comment>
<comment type="pathway">
    <text evidence="1">Amino-acid degradation; L-arginine degradation via AST pathway; L-glutamate and succinate from L-arginine: step 2/5.</text>
</comment>
<comment type="subunit">
    <text evidence="1">Homodimer.</text>
</comment>
<comment type="similarity">
    <text evidence="1">Belongs to the succinylarginine dihydrolase family.</text>
</comment>